<feature type="chain" id="PRO_1000198551" description="tRNA/tmRNA (uracil-C(5))-methyltransferase">
    <location>
        <begin position="1"/>
        <end position="366"/>
    </location>
</feature>
<feature type="active site" description="Nucleophile" evidence="1">
    <location>
        <position position="324"/>
    </location>
</feature>
<feature type="active site" description="Proton acceptor" evidence="1">
    <location>
        <position position="358"/>
    </location>
</feature>
<feature type="binding site" evidence="1">
    <location>
        <position position="190"/>
    </location>
    <ligand>
        <name>S-adenosyl-L-methionine</name>
        <dbReference type="ChEBI" id="CHEBI:59789"/>
    </ligand>
</feature>
<feature type="binding site" evidence="1">
    <location>
        <position position="218"/>
    </location>
    <ligand>
        <name>S-adenosyl-L-methionine</name>
        <dbReference type="ChEBI" id="CHEBI:59789"/>
    </ligand>
</feature>
<feature type="binding site" evidence="1">
    <location>
        <position position="223"/>
    </location>
    <ligand>
        <name>S-adenosyl-L-methionine</name>
        <dbReference type="ChEBI" id="CHEBI:59789"/>
    </ligand>
</feature>
<feature type="binding site" evidence="1">
    <location>
        <position position="239"/>
    </location>
    <ligand>
        <name>S-adenosyl-L-methionine</name>
        <dbReference type="ChEBI" id="CHEBI:59789"/>
    </ligand>
</feature>
<feature type="binding site" evidence="1">
    <location>
        <position position="299"/>
    </location>
    <ligand>
        <name>S-adenosyl-L-methionine</name>
        <dbReference type="ChEBI" id="CHEBI:59789"/>
    </ligand>
</feature>
<gene>
    <name evidence="1" type="primary">trmA</name>
    <name type="ordered locus">SeD_A4534</name>
</gene>
<organism>
    <name type="scientific">Salmonella dublin (strain CT_02021853)</name>
    <dbReference type="NCBI Taxonomy" id="439851"/>
    <lineage>
        <taxon>Bacteria</taxon>
        <taxon>Pseudomonadati</taxon>
        <taxon>Pseudomonadota</taxon>
        <taxon>Gammaproteobacteria</taxon>
        <taxon>Enterobacterales</taxon>
        <taxon>Enterobacteriaceae</taxon>
        <taxon>Salmonella</taxon>
    </lineage>
</organism>
<accession>B5FPX9</accession>
<protein>
    <recommendedName>
        <fullName evidence="1">tRNA/tmRNA (uracil-C(5))-methyltransferase</fullName>
        <ecNumber evidence="1">2.1.1.-</ecNumber>
        <ecNumber evidence="1">2.1.1.35</ecNumber>
    </recommendedName>
    <alternativeName>
        <fullName evidence="1">tRNA (uracil(54)-C(5))-methyltransferase</fullName>
    </alternativeName>
    <alternativeName>
        <fullName evidence="1">tRNA(m5U54)-methyltransferase</fullName>
        <shortName evidence="1">RUMT</shortName>
    </alternativeName>
    <alternativeName>
        <fullName evidence="1">tmRNA (uracil(341)-C(5))-methyltransferase</fullName>
    </alternativeName>
</protein>
<sequence length="366" mass="41896">MTPEHLPTEQYEAQLAEKVARLQSMMAPFSGLVPEVFRSPVSHYRMRAEFRLWHDGDDLYHIMFDQQTKSRIRVDTFPAASQLINTLMKAMIAGVRDNHALRHKLFQIDYLTTLSNQAVVSLLYHKKLDEEWREAATALRDALRAQGLNVHLIGRATKTKIELDQDYIDERLPVAGKEMIYRQVENSFTQPNAAMNIQMLEWALEVTKDSKGDLLELYCGNGNFSLALARNFNRVLATEIAKPSVAAAQYNIAANHIDNVQIIRMAAEEFTQAMNGVREFNRLQGIDLKRYQCETIFVDPPRSGLDSETEKMVQAYPRILYISCNPETLCKNLETLSQTHTVSRLALFDQFPYTHHMECGVLLTAR</sequence>
<comment type="function">
    <text evidence="1">Dual-specificity methyltransferase that catalyzes the formation of 5-methyluridine at position 54 (m5U54) in all tRNAs, and that of position 341 (m5U341) in tmRNA (transfer-mRNA).</text>
</comment>
<comment type="catalytic activity">
    <reaction evidence="1">
        <text>uridine(54) in tRNA + S-adenosyl-L-methionine = 5-methyluridine(54) in tRNA + S-adenosyl-L-homocysteine + H(+)</text>
        <dbReference type="Rhea" id="RHEA:42712"/>
        <dbReference type="Rhea" id="RHEA-COMP:10167"/>
        <dbReference type="Rhea" id="RHEA-COMP:10193"/>
        <dbReference type="ChEBI" id="CHEBI:15378"/>
        <dbReference type="ChEBI" id="CHEBI:57856"/>
        <dbReference type="ChEBI" id="CHEBI:59789"/>
        <dbReference type="ChEBI" id="CHEBI:65315"/>
        <dbReference type="ChEBI" id="CHEBI:74447"/>
        <dbReference type="EC" id="2.1.1.35"/>
    </reaction>
</comment>
<comment type="catalytic activity">
    <reaction evidence="1">
        <text>uridine(341) in tmRNA + S-adenosyl-L-methionine = 5-methyluridine(341) in tmRNA + S-adenosyl-L-homocysteine + H(+)</text>
        <dbReference type="Rhea" id="RHEA:43612"/>
        <dbReference type="Rhea" id="RHEA-COMP:10630"/>
        <dbReference type="Rhea" id="RHEA-COMP:10631"/>
        <dbReference type="ChEBI" id="CHEBI:15378"/>
        <dbReference type="ChEBI" id="CHEBI:57856"/>
        <dbReference type="ChEBI" id="CHEBI:59789"/>
        <dbReference type="ChEBI" id="CHEBI:65315"/>
        <dbReference type="ChEBI" id="CHEBI:74447"/>
    </reaction>
</comment>
<comment type="similarity">
    <text evidence="1">Belongs to the class I-like SAM-binding methyltransferase superfamily. RNA M5U methyltransferase family. TrmA subfamily.</text>
</comment>
<dbReference type="EC" id="2.1.1.-" evidence="1"/>
<dbReference type="EC" id="2.1.1.35" evidence="1"/>
<dbReference type="EMBL" id="CP001144">
    <property type="protein sequence ID" value="ACH75497.1"/>
    <property type="molecule type" value="Genomic_DNA"/>
</dbReference>
<dbReference type="RefSeq" id="WP_000186981.1">
    <property type="nucleotide sequence ID" value="NC_011205.1"/>
</dbReference>
<dbReference type="SMR" id="B5FPX9"/>
<dbReference type="KEGG" id="sed:SeD_A4534"/>
<dbReference type="HOGENOM" id="CLU_043022_0_0_6"/>
<dbReference type="Proteomes" id="UP000008322">
    <property type="component" value="Chromosome"/>
</dbReference>
<dbReference type="GO" id="GO:0005829">
    <property type="term" value="C:cytosol"/>
    <property type="evidence" value="ECO:0007669"/>
    <property type="project" value="TreeGrafter"/>
</dbReference>
<dbReference type="GO" id="GO:0019843">
    <property type="term" value="F:rRNA binding"/>
    <property type="evidence" value="ECO:0007669"/>
    <property type="project" value="TreeGrafter"/>
</dbReference>
<dbReference type="GO" id="GO:0030697">
    <property type="term" value="F:tRNA (uracil(54)-C5)-methyltransferase activity, S-adenosyl methionine-dependent"/>
    <property type="evidence" value="ECO:0007669"/>
    <property type="project" value="UniProtKB-UniRule"/>
</dbReference>
<dbReference type="GO" id="GO:0000049">
    <property type="term" value="F:tRNA binding"/>
    <property type="evidence" value="ECO:0007669"/>
    <property type="project" value="TreeGrafter"/>
</dbReference>
<dbReference type="GO" id="GO:0030488">
    <property type="term" value="P:tRNA methylation"/>
    <property type="evidence" value="ECO:0007669"/>
    <property type="project" value="UniProtKB-UniRule"/>
</dbReference>
<dbReference type="CDD" id="cd02440">
    <property type="entry name" value="AdoMet_MTases"/>
    <property type="match status" value="1"/>
</dbReference>
<dbReference type="FunFam" id="2.40.50.1070:FF:000001">
    <property type="entry name" value="tRNA/tmRNA (uracil-C(5))-methyltransferase"/>
    <property type="match status" value="1"/>
</dbReference>
<dbReference type="FunFam" id="3.40.50.150:FF:000012">
    <property type="entry name" value="tRNA/tmRNA (uracil-C(5))-methyltransferase"/>
    <property type="match status" value="1"/>
</dbReference>
<dbReference type="Gene3D" id="2.40.50.1070">
    <property type="match status" value="1"/>
</dbReference>
<dbReference type="Gene3D" id="3.40.50.150">
    <property type="entry name" value="Vaccinia Virus protein VP39"/>
    <property type="match status" value="1"/>
</dbReference>
<dbReference type="HAMAP" id="MF_01011">
    <property type="entry name" value="RNA_methyltr_TrmA"/>
    <property type="match status" value="1"/>
</dbReference>
<dbReference type="InterPro" id="IPR030390">
    <property type="entry name" value="MeTrfase_TrmA_AS"/>
</dbReference>
<dbReference type="InterPro" id="IPR030391">
    <property type="entry name" value="MeTrfase_TrmA_CS"/>
</dbReference>
<dbReference type="InterPro" id="IPR029063">
    <property type="entry name" value="SAM-dependent_MTases_sf"/>
</dbReference>
<dbReference type="InterPro" id="IPR011869">
    <property type="entry name" value="TrmA_MeTrfase"/>
</dbReference>
<dbReference type="InterPro" id="IPR010280">
    <property type="entry name" value="U5_MeTrfase_fam"/>
</dbReference>
<dbReference type="NCBIfam" id="TIGR02143">
    <property type="entry name" value="trmA_only"/>
    <property type="match status" value="1"/>
</dbReference>
<dbReference type="PANTHER" id="PTHR47790">
    <property type="entry name" value="TRNA/TMRNA (URACIL-C(5))-METHYLTRANSFERASE"/>
    <property type="match status" value="1"/>
</dbReference>
<dbReference type="PANTHER" id="PTHR47790:SF2">
    <property type="entry name" value="TRNA_TMRNA (URACIL-C(5))-METHYLTRANSFERASE"/>
    <property type="match status" value="1"/>
</dbReference>
<dbReference type="Pfam" id="PF05958">
    <property type="entry name" value="tRNA_U5-meth_tr"/>
    <property type="match status" value="1"/>
</dbReference>
<dbReference type="SUPFAM" id="SSF53335">
    <property type="entry name" value="S-adenosyl-L-methionine-dependent methyltransferases"/>
    <property type="match status" value="1"/>
</dbReference>
<dbReference type="PROSITE" id="PS51687">
    <property type="entry name" value="SAM_MT_RNA_M5U"/>
    <property type="match status" value="1"/>
</dbReference>
<dbReference type="PROSITE" id="PS01230">
    <property type="entry name" value="TRMA_1"/>
    <property type="match status" value="1"/>
</dbReference>
<dbReference type="PROSITE" id="PS01231">
    <property type="entry name" value="TRMA_2"/>
    <property type="match status" value="1"/>
</dbReference>
<keyword id="KW-0489">Methyltransferase</keyword>
<keyword id="KW-0949">S-adenosyl-L-methionine</keyword>
<keyword id="KW-0808">Transferase</keyword>
<keyword id="KW-0819">tRNA processing</keyword>
<proteinExistence type="inferred from homology"/>
<evidence type="ECO:0000255" key="1">
    <source>
        <dbReference type="HAMAP-Rule" id="MF_01011"/>
    </source>
</evidence>
<name>TRMA_SALDC</name>
<reference key="1">
    <citation type="journal article" date="2011" name="J. Bacteriol.">
        <title>Comparative genomics of 28 Salmonella enterica isolates: evidence for CRISPR-mediated adaptive sublineage evolution.</title>
        <authorList>
            <person name="Fricke W.F."/>
            <person name="Mammel M.K."/>
            <person name="McDermott P.F."/>
            <person name="Tartera C."/>
            <person name="White D.G."/>
            <person name="Leclerc J.E."/>
            <person name="Ravel J."/>
            <person name="Cebula T.A."/>
        </authorList>
    </citation>
    <scope>NUCLEOTIDE SEQUENCE [LARGE SCALE GENOMIC DNA]</scope>
    <source>
        <strain>CT_02021853</strain>
    </source>
</reference>